<dbReference type="EC" id="2.7.4.22" evidence="1"/>
<dbReference type="EMBL" id="CP000117">
    <property type="protein sequence ID" value="ABA20252.1"/>
    <property type="molecule type" value="Genomic_DNA"/>
</dbReference>
<dbReference type="SMR" id="Q3MFI4"/>
<dbReference type="STRING" id="240292.Ava_0628"/>
<dbReference type="KEGG" id="ava:Ava_0628"/>
<dbReference type="eggNOG" id="COG0528">
    <property type="taxonomic scope" value="Bacteria"/>
</dbReference>
<dbReference type="HOGENOM" id="CLU_033861_0_0_3"/>
<dbReference type="UniPathway" id="UPA00159">
    <property type="reaction ID" value="UER00275"/>
</dbReference>
<dbReference type="Proteomes" id="UP000002533">
    <property type="component" value="Chromosome"/>
</dbReference>
<dbReference type="GO" id="GO:0005737">
    <property type="term" value="C:cytoplasm"/>
    <property type="evidence" value="ECO:0007669"/>
    <property type="project" value="UniProtKB-SubCell"/>
</dbReference>
<dbReference type="GO" id="GO:0005524">
    <property type="term" value="F:ATP binding"/>
    <property type="evidence" value="ECO:0007669"/>
    <property type="project" value="UniProtKB-KW"/>
</dbReference>
<dbReference type="GO" id="GO:0033862">
    <property type="term" value="F:UMP kinase activity"/>
    <property type="evidence" value="ECO:0007669"/>
    <property type="project" value="UniProtKB-EC"/>
</dbReference>
<dbReference type="GO" id="GO:0044210">
    <property type="term" value="P:'de novo' CTP biosynthetic process"/>
    <property type="evidence" value="ECO:0007669"/>
    <property type="project" value="UniProtKB-UniRule"/>
</dbReference>
<dbReference type="GO" id="GO:0006225">
    <property type="term" value="P:UDP biosynthetic process"/>
    <property type="evidence" value="ECO:0007669"/>
    <property type="project" value="TreeGrafter"/>
</dbReference>
<dbReference type="CDD" id="cd04254">
    <property type="entry name" value="AAK_UMPK-PyrH-Ec"/>
    <property type="match status" value="1"/>
</dbReference>
<dbReference type="FunFam" id="3.40.1160.10:FF:000001">
    <property type="entry name" value="Uridylate kinase"/>
    <property type="match status" value="1"/>
</dbReference>
<dbReference type="Gene3D" id="3.40.1160.10">
    <property type="entry name" value="Acetylglutamate kinase-like"/>
    <property type="match status" value="1"/>
</dbReference>
<dbReference type="HAMAP" id="MF_01220_B">
    <property type="entry name" value="PyrH_B"/>
    <property type="match status" value="1"/>
</dbReference>
<dbReference type="InterPro" id="IPR036393">
    <property type="entry name" value="AceGlu_kinase-like_sf"/>
</dbReference>
<dbReference type="InterPro" id="IPR001048">
    <property type="entry name" value="Asp/Glu/Uridylate_kinase"/>
</dbReference>
<dbReference type="InterPro" id="IPR011817">
    <property type="entry name" value="Uridylate_kinase"/>
</dbReference>
<dbReference type="InterPro" id="IPR015963">
    <property type="entry name" value="Uridylate_kinase_bac"/>
</dbReference>
<dbReference type="NCBIfam" id="TIGR02075">
    <property type="entry name" value="pyrH_bact"/>
    <property type="match status" value="1"/>
</dbReference>
<dbReference type="PANTHER" id="PTHR42833">
    <property type="entry name" value="URIDYLATE KINASE"/>
    <property type="match status" value="1"/>
</dbReference>
<dbReference type="PANTHER" id="PTHR42833:SF4">
    <property type="entry name" value="URIDYLATE KINASE PUMPKIN, CHLOROPLASTIC"/>
    <property type="match status" value="1"/>
</dbReference>
<dbReference type="Pfam" id="PF00696">
    <property type="entry name" value="AA_kinase"/>
    <property type="match status" value="1"/>
</dbReference>
<dbReference type="PIRSF" id="PIRSF005650">
    <property type="entry name" value="Uridylate_kin"/>
    <property type="match status" value="1"/>
</dbReference>
<dbReference type="SUPFAM" id="SSF53633">
    <property type="entry name" value="Carbamate kinase-like"/>
    <property type="match status" value="1"/>
</dbReference>
<organism>
    <name type="scientific">Trichormus variabilis (strain ATCC 29413 / PCC 7937)</name>
    <name type="common">Anabaena variabilis</name>
    <dbReference type="NCBI Taxonomy" id="240292"/>
    <lineage>
        <taxon>Bacteria</taxon>
        <taxon>Bacillati</taxon>
        <taxon>Cyanobacteriota</taxon>
        <taxon>Cyanophyceae</taxon>
        <taxon>Nostocales</taxon>
        <taxon>Nostocaceae</taxon>
        <taxon>Trichormus</taxon>
    </lineage>
</organism>
<comment type="function">
    <text evidence="1">Catalyzes the reversible phosphorylation of UMP to UDP.</text>
</comment>
<comment type="catalytic activity">
    <reaction evidence="1">
        <text>UMP + ATP = UDP + ADP</text>
        <dbReference type="Rhea" id="RHEA:24400"/>
        <dbReference type="ChEBI" id="CHEBI:30616"/>
        <dbReference type="ChEBI" id="CHEBI:57865"/>
        <dbReference type="ChEBI" id="CHEBI:58223"/>
        <dbReference type="ChEBI" id="CHEBI:456216"/>
        <dbReference type="EC" id="2.7.4.22"/>
    </reaction>
</comment>
<comment type="activity regulation">
    <text evidence="1">Allosterically activated by GTP. Inhibited by UTP.</text>
</comment>
<comment type="pathway">
    <text evidence="1">Pyrimidine metabolism; CTP biosynthesis via de novo pathway; UDP from UMP (UMPK route): step 1/1.</text>
</comment>
<comment type="subunit">
    <text evidence="1">Homohexamer.</text>
</comment>
<comment type="subcellular location">
    <subcellularLocation>
        <location evidence="1">Cytoplasm</location>
    </subcellularLocation>
</comment>
<comment type="similarity">
    <text evidence="1">Belongs to the UMP kinase family.</text>
</comment>
<sequence length="242" mass="26028">MGTNYRRVLLKLSGEALMGNMGYGIDPEVVKEIAQEIAEVIATGVQIAIVVGGGNIFRGVKAASAGMDRATADYIGMIATVMNAMTLQDSLERIGVQTRVQTAIAMQELAEPYIRRRAIRHLEKGRVVIFGAGSGNPFFTTDTTAALRAAEIDAEVIFKATKVDGVYDADPEVYPNAKRYNSLTYAHVLAQDLRVMDSTAIALCKENNIPILVFDLTTRGNIRRAVLGESIGTLVGGSCEIS</sequence>
<gene>
    <name evidence="1" type="primary">pyrH</name>
    <name type="ordered locus">Ava_0628</name>
</gene>
<proteinExistence type="inferred from homology"/>
<keyword id="KW-0021">Allosteric enzyme</keyword>
<keyword id="KW-0067">ATP-binding</keyword>
<keyword id="KW-0963">Cytoplasm</keyword>
<keyword id="KW-0418">Kinase</keyword>
<keyword id="KW-0547">Nucleotide-binding</keyword>
<keyword id="KW-0665">Pyrimidine biosynthesis</keyword>
<keyword id="KW-0808">Transferase</keyword>
<name>PYRH_TRIV2</name>
<feature type="chain" id="PRO_1000053887" description="Uridylate kinase">
    <location>
        <begin position="1"/>
        <end position="242"/>
    </location>
</feature>
<feature type="region of interest" description="Involved in allosteric activation by GTP" evidence="1">
    <location>
        <begin position="19"/>
        <end position="24"/>
    </location>
</feature>
<feature type="binding site" evidence="1">
    <location>
        <begin position="11"/>
        <end position="14"/>
    </location>
    <ligand>
        <name>ATP</name>
        <dbReference type="ChEBI" id="CHEBI:30616"/>
    </ligand>
</feature>
<feature type="binding site" evidence="1">
    <location>
        <position position="53"/>
    </location>
    <ligand>
        <name>UMP</name>
        <dbReference type="ChEBI" id="CHEBI:57865"/>
    </ligand>
</feature>
<feature type="binding site" evidence="1">
    <location>
        <position position="54"/>
    </location>
    <ligand>
        <name>ATP</name>
        <dbReference type="ChEBI" id="CHEBI:30616"/>
    </ligand>
</feature>
<feature type="binding site" evidence="1">
    <location>
        <position position="58"/>
    </location>
    <ligand>
        <name>ATP</name>
        <dbReference type="ChEBI" id="CHEBI:30616"/>
    </ligand>
</feature>
<feature type="binding site" evidence="1">
    <location>
        <position position="73"/>
    </location>
    <ligand>
        <name>UMP</name>
        <dbReference type="ChEBI" id="CHEBI:57865"/>
    </ligand>
</feature>
<feature type="binding site" evidence="1">
    <location>
        <begin position="134"/>
        <end position="141"/>
    </location>
    <ligand>
        <name>UMP</name>
        <dbReference type="ChEBI" id="CHEBI:57865"/>
    </ligand>
</feature>
<feature type="binding site" evidence="1">
    <location>
        <position position="161"/>
    </location>
    <ligand>
        <name>ATP</name>
        <dbReference type="ChEBI" id="CHEBI:30616"/>
    </ligand>
</feature>
<feature type="binding site" evidence="1">
    <location>
        <position position="167"/>
    </location>
    <ligand>
        <name>ATP</name>
        <dbReference type="ChEBI" id="CHEBI:30616"/>
    </ligand>
</feature>
<feature type="binding site" evidence="1">
    <location>
        <position position="170"/>
    </location>
    <ligand>
        <name>ATP</name>
        <dbReference type="ChEBI" id="CHEBI:30616"/>
    </ligand>
</feature>
<accession>Q3MFI4</accession>
<protein>
    <recommendedName>
        <fullName evidence="1">Uridylate kinase</fullName>
        <shortName evidence="1">UK</shortName>
        <ecNumber evidence="1">2.7.4.22</ecNumber>
    </recommendedName>
    <alternativeName>
        <fullName evidence="1">Uridine monophosphate kinase</fullName>
        <shortName evidence="1">UMP kinase</shortName>
        <shortName evidence="1">UMPK</shortName>
    </alternativeName>
</protein>
<reference key="1">
    <citation type="journal article" date="2014" name="Stand. Genomic Sci.">
        <title>Complete genome sequence of Anabaena variabilis ATCC 29413.</title>
        <authorList>
            <person name="Thiel T."/>
            <person name="Pratte B.S."/>
            <person name="Zhong J."/>
            <person name="Goodwin L."/>
            <person name="Copeland A."/>
            <person name="Lucas S."/>
            <person name="Han C."/>
            <person name="Pitluck S."/>
            <person name="Land M.L."/>
            <person name="Kyrpides N.C."/>
            <person name="Woyke T."/>
        </authorList>
    </citation>
    <scope>NUCLEOTIDE SEQUENCE [LARGE SCALE GENOMIC DNA]</scope>
    <source>
        <strain>ATCC 29413 / PCC 7937</strain>
    </source>
</reference>
<evidence type="ECO:0000255" key="1">
    <source>
        <dbReference type="HAMAP-Rule" id="MF_01220"/>
    </source>
</evidence>